<keyword id="KW-0143">Chaperone</keyword>
<keyword id="KW-0963">Cytoplasm</keyword>
<keyword id="KW-0346">Stress response</keyword>
<gene>
    <name evidence="1" type="primary">ibpA</name>
    <name type="ordered locus">YPK_0011</name>
</gene>
<name>IBPA_YERPY</name>
<proteinExistence type="inferred from homology"/>
<organism>
    <name type="scientific">Yersinia pseudotuberculosis serotype O:3 (strain YPIII)</name>
    <dbReference type="NCBI Taxonomy" id="502800"/>
    <lineage>
        <taxon>Bacteria</taxon>
        <taxon>Pseudomonadati</taxon>
        <taxon>Pseudomonadota</taxon>
        <taxon>Gammaproteobacteria</taxon>
        <taxon>Enterobacterales</taxon>
        <taxon>Yersiniaceae</taxon>
        <taxon>Yersinia</taxon>
    </lineage>
</organism>
<comment type="function">
    <text evidence="1">Associates with aggregated proteins, together with IbpB, to stabilize and protect them from irreversible denaturation and extensive proteolysis during heat shock and oxidative stress. Aggregated proteins bound to the IbpAB complex are more efficiently refolded and reactivated by the ATP-dependent chaperone systems ClpB and DnaK/DnaJ/GrpE. Its activity is ATP-independent.</text>
</comment>
<comment type="subunit">
    <text evidence="1">Monomer. Forms homomultimers of about 100-150 subunits at optimal growth temperatures. Conformation changes to monomers at high temperatures or high ionic concentrations.</text>
</comment>
<comment type="subcellular location">
    <subcellularLocation>
        <location evidence="1">Cytoplasm</location>
    </subcellularLocation>
</comment>
<comment type="similarity">
    <text evidence="1 2">Belongs to the small heat shock protein (HSP20) family.</text>
</comment>
<reference key="1">
    <citation type="submission" date="2008-02" db="EMBL/GenBank/DDBJ databases">
        <title>Complete sequence of Yersinia pseudotuberculosis YPIII.</title>
        <authorList>
            <consortium name="US DOE Joint Genome Institute"/>
            <person name="Copeland A."/>
            <person name="Lucas S."/>
            <person name="Lapidus A."/>
            <person name="Glavina del Rio T."/>
            <person name="Dalin E."/>
            <person name="Tice H."/>
            <person name="Bruce D."/>
            <person name="Goodwin L."/>
            <person name="Pitluck S."/>
            <person name="Munk A.C."/>
            <person name="Brettin T."/>
            <person name="Detter J.C."/>
            <person name="Han C."/>
            <person name="Tapia R."/>
            <person name="Schmutz J."/>
            <person name="Larimer F."/>
            <person name="Land M."/>
            <person name="Hauser L."/>
            <person name="Challacombe J.F."/>
            <person name="Green L."/>
            <person name="Lindler L.E."/>
            <person name="Nikolich M.P."/>
            <person name="Richardson P."/>
        </authorList>
    </citation>
    <scope>NUCLEOTIDE SEQUENCE [LARGE SCALE GENOMIC DNA]</scope>
    <source>
        <strain>YPIII</strain>
    </source>
</reference>
<sequence>MRNSDLAPLYRSAIGFDRLFNLLESGQNQSNGGYPPYNVELVDENNYRIAIAVAGFAEQELEITTQDNLLIVRGSHANEPAQRTYLYQGIAERNFERKFQLAEHIKIKGANLVNGLLYIDLERLVPESLKPRRIEIK</sequence>
<feature type="chain" id="PRO_1000189094" description="Small heat shock protein IbpA">
    <location>
        <begin position="1"/>
        <end position="137"/>
    </location>
</feature>
<feature type="domain" description="sHSP" evidence="2">
    <location>
        <begin position="28"/>
        <end position="137"/>
    </location>
</feature>
<protein>
    <recommendedName>
        <fullName evidence="1">Small heat shock protein IbpA</fullName>
    </recommendedName>
    <alternativeName>
        <fullName evidence="1">16 kDa heat shock protein A</fullName>
    </alternativeName>
</protein>
<evidence type="ECO:0000255" key="1">
    <source>
        <dbReference type="HAMAP-Rule" id="MF_02000"/>
    </source>
</evidence>
<evidence type="ECO:0000255" key="2">
    <source>
        <dbReference type="PROSITE-ProRule" id="PRU00285"/>
    </source>
</evidence>
<dbReference type="EMBL" id="CP000950">
    <property type="protein sequence ID" value="ACA66325.1"/>
    <property type="molecule type" value="Genomic_DNA"/>
</dbReference>
<dbReference type="RefSeq" id="WP_002209636.1">
    <property type="nucleotide sequence ID" value="NZ_CP009792.1"/>
</dbReference>
<dbReference type="SMR" id="B1JGZ5"/>
<dbReference type="GeneID" id="96663430"/>
<dbReference type="KEGG" id="ypy:YPK_0011"/>
<dbReference type="PATRIC" id="fig|502800.11.peg.613"/>
<dbReference type="GO" id="GO:0005737">
    <property type="term" value="C:cytoplasm"/>
    <property type="evidence" value="ECO:0007669"/>
    <property type="project" value="UniProtKB-SubCell"/>
</dbReference>
<dbReference type="GO" id="GO:0050821">
    <property type="term" value="P:protein stabilization"/>
    <property type="evidence" value="ECO:0007669"/>
    <property type="project" value="UniProtKB-UniRule"/>
</dbReference>
<dbReference type="CDD" id="cd06470">
    <property type="entry name" value="ACD_IbpA-B_like"/>
    <property type="match status" value="1"/>
</dbReference>
<dbReference type="FunFam" id="2.60.40.790:FF:000002">
    <property type="entry name" value="Small heat shock protein IbpA"/>
    <property type="match status" value="1"/>
</dbReference>
<dbReference type="Gene3D" id="2.60.40.790">
    <property type="match status" value="1"/>
</dbReference>
<dbReference type="HAMAP" id="MF_02000">
    <property type="entry name" value="HSP20_IbpA"/>
    <property type="match status" value="1"/>
</dbReference>
<dbReference type="InterPro" id="IPR002068">
    <property type="entry name" value="A-crystallin/Hsp20_dom"/>
</dbReference>
<dbReference type="InterPro" id="IPR037913">
    <property type="entry name" value="ACD_IbpA/B"/>
</dbReference>
<dbReference type="InterPro" id="IPR008978">
    <property type="entry name" value="HSP20-like_chaperone"/>
</dbReference>
<dbReference type="InterPro" id="IPR023728">
    <property type="entry name" value="HSP20_IbpA"/>
</dbReference>
<dbReference type="NCBIfam" id="NF008013">
    <property type="entry name" value="PRK10743.1"/>
    <property type="match status" value="1"/>
</dbReference>
<dbReference type="PANTHER" id="PTHR47062">
    <property type="match status" value="1"/>
</dbReference>
<dbReference type="PANTHER" id="PTHR47062:SF1">
    <property type="entry name" value="SMALL HEAT SHOCK PROTEIN IBPA"/>
    <property type="match status" value="1"/>
</dbReference>
<dbReference type="Pfam" id="PF00011">
    <property type="entry name" value="HSP20"/>
    <property type="match status" value="1"/>
</dbReference>
<dbReference type="SUPFAM" id="SSF49764">
    <property type="entry name" value="HSP20-like chaperones"/>
    <property type="match status" value="1"/>
</dbReference>
<dbReference type="PROSITE" id="PS01031">
    <property type="entry name" value="SHSP"/>
    <property type="match status" value="1"/>
</dbReference>
<accession>B1JGZ5</accession>